<protein>
    <recommendedName>
        <fullName evidence="1">GTP 3',8-cyclase</fullName>
        <ecNumber evidence="1">4.1.99.22</ecNumber>
    </recommendedName>
    <alternativeName>
        <fullName evidence="1">Molybdenum cofactor biosynthesis protein A</fullName>
    </alternativeName>
</protein>
<accession>Q0AVU6</accession>
<comment type="function">
    <text evidence="1">Catalyzes the cyclization of GTP to (8S)-3',8-cyclo-7,8-dihydroguanosine 5'-triphosphate.</text>
</comment>
<comment type="catalytic activity">
    <reaction evidence="1">
        <text>GTP + AH2 + S-adenosyl-L-methionine = (8S)-3',8-cyclo-7,8-dihydroguanosine 5'-triphosphate + 5'-deoxyadenosine + L-methionine + A + H(+)</text>
        <dbReference type="Rhea" id="RHEA:49576"/>
        <dbReference type="ChEBI" id="CHEBI:13193"/>
        <dbReference type="ChEBI" id="CHEBI:15378"/>
        <dbReference type="ChEBI" id="CHEBI:17319"/>
        <dbReference type="ChEBI" id="CHEBI:17499"/>
        <dbReference type="ChEBI" id="CHEBI:37565"/>
        <dbReference type="ChEBI" id="CHEBI:57844"/>
        <dbReference type="ChEBI" id="CHEBI:59789"/>
        <dbReference type="ChEBI" id="CHEBI:131766"/>
        <dbReference type="EC" id="4.1.99.22"/>
    </reaction>
</comment>
<comment type="cofactor">
    <cofactor evidence="1">
        <name>[4Fe-4S] cluster</name>
        <dbReference type="ChEBI" id="CHEBI:49883"/>
    </cofactor>
    <text evidence="1">Binds 2 [4Fe-4S] clusters. Binds 1 [4Fe-4S] cluster coordinated with 3 cysteines and an exchangeable S-adenosyl-L-methionine and 1 [4Fe-4S] cluster coordinated with 3 cysteines and the GTP-derived substrate.</text>
</comment>
<comment type="pathway">
    <text evidence="1">Cofactor biosynthesis; molybdopterin biosynthesis.</text>
</comment>
<comment type="subunit">
    <text evidence="1">Monomer and homodimer.</text>
</comment>
<comment type="similarity">
    <text evidence="1">Belongs to the radical SAM superfamily. MoaA family.</text>
</comment>
<keyword id="KW-0004">4Fe-4S</keyword>
<keyword id="KW-0342">GTP-binding</keyword>
<keyword id="KW-0408">Iron</keyword>
<keyword id="KW-0411">Iron-sulfur</keyword>
<keyword id="KW-0456">Lyase</keyword>
<keyword id="KW-0479">Metal-binding</keyword>
<keyword id="KW-0501">Molybdenum cofactor biosynthesis</keyword>
<keyword id="KW-0547">Nucleotide-binding</keyword>
<keyword id="KW-1185">Reference proteome</keyword>
<keyword id="KW-0949">S-adenosyl-L-methionine</keyword>
<gene>
    <name evidence="1" type="primary">moaA</name>
    <name type="ordered locus">Swol_1860</name>
</gene>
<organism>
    <name type="scientific">Syntrophomonas wolfei subsp. wolfei (strain DSM 2245B / Goettingen)</name>
    <dbReference type="NCBI Taxonomy" id="335541"/>
    <lineage>
        <taxon>Bacteria</taxon>
        <taxon>Bacillati</taxon>
        <taxon>Bacillota</taxon>
        <taxon>Clostridia</taxon>
        <taxon>Eubacteriales</taxon>
        <taxon>Syntrophomonadaceae</taxon>
        <taxon>Syntrophomonas</taxon>
    </lineage>
</organism>
<feature type="chain" id="PRO_1000054237" description="GTP 3',8-cyclase">
    <location>
        <begin position="1"/>
        <end position="326"/>
    </location>
</feature>
<feature type="domain" description="Radical SAM core" evidence="2">
    <location>
        <begin position="4"/>
        <end position="227"/>
    </location>
</feature>
<feature type="binding site" evidence="1">
    <location>
        <position position="13"/>
    </location>
    <ligand>
        <name>GTP</name>
        <dbReference type="ChEBI" id="CHEBI:37565"/>
    </ligand>
</feature>
<feature type="binding site" evidence="1">
    <location>
        <position position="20"/>
    </location>
    <ligand>
        <name>[4Fe-4S] cluster</name>
        <dbReference type="ChEBI" id="CHEBI:49883"/>
        <label>1</label>
        <note>4Fe-4S-S-AdoMet</note>
    </ligand>
</feature>
<feature type="binding site" evidence="1">
    <location>
        <position position="24"/>
    </location>
    <ligand>
        <name>[4Fe-4S] cluster</name>
        <dbReference type="ChEBI" id="CHEBI:49883"/>
        <label>1</label>
        <note>4Fe-4S-S-AdoMet</note>
    </ligand>
</feature>
<feature type="binding site" evidence="1">
    <location>
        <position position="26"/>
    </location>
    <ligand>
        <name>S-adenosyl-L-methionine</name>
        <dbReference type="ChEBI" id="CHEBI:59789"/>
    </ligand>
</feature>
<feature type="binding site" evidence="1">
    <location>
        <position position="27"/>
    </location>
    <ligand>
        <name>[4Fe-4S] cluster</name>
        <dbReference type="ChEBI" id="CHEBI:49883"/>
        <label>1</label>
        <note>4Fe-4S-S-AdoMet</note>
    </ligand>
</feature>
<feature type="binding site" evidence="1">
    <location>
        <position position="63"/>
    </location>
    <ligand>
        <name>GTP</name>
        <dbReference type="ChEBI" id="CHEBI:37565"/>
    </ligand>
</feature>
<feature type="binding site" evidence="1">
    <location>
        <position position="67"/>
    </location>
    <ligand>
        <name>S-adenosyl-L-methionine</name>
        <dbReference type="ChEBI" id="CHEBI:59789"/>
    </ligand>
</feature>
<feature type="binding site" evidence="1">
    <location>
        <position position="94"/>
    </location>
    <ligand>
        <name>GTP</name>
        <dbReference type="ChEBI" id="CHEBI:37565"/>
    </ligand>
</feature>
<feature type="binding site" evidence="1">
    <location>
        <position position="118"/>
    </location>
    <ligand>
        <name>S-adenosyl-L-methionine</name>
        <dbReference type="ChEBI" id="CHEBI:59789"/>
    </ligand>
</feature>
<feature type="binding site" evidence="1">
    <location>
        <position position="155"/>
    </location>
    <ligand>
        <name>GTP</name>
        <dbReference type="ChEBI" id="CHEBI:37565"/>
    </ligand>
</feature>
<feature type="binding site" evidence="1">
    <location>
        <position position="189"/>
    </location>
    <ligand>
        <name>S-adenosyl-L-methionine</name>
        <dbReference type="ChEBI" id="CHEBI:59789"/>
    </ligand>
</feature>
<feature type="binding site" evidence="1">
    <location>
        <position position="253"/>
    </location>
    <ligand>
        <name>[4Fe-4S] cluster</name>
        <dbReference type="ChEBI" id="CHEBI:49883"/>
        <label>2</label>
        <note>4Fe-4S-substrate</note>
    </ligand>
</feature>
<feature type="binding site" evidence="1">
    <location>
        <position position="256"/>
    </location>
    <ligand>
        <name>[4Fe-4S] cluster</name>
        <dbReference type="ChEBI" id="CHEBI:49883"/>
        <label>2</label>
        <note>4Fe-4S-substrate</note>
    </ligand>
</feature>
<feature type="binding site" evidence="1">
    <location>
        <begin position="258"/>
        <end position="260"/>
    </location>
    <ligand>
        <name>GTP</name>
        <dbReference type="ChEBI" id="CHEBI:37565"/>
    </ligand>
</feature>
<feature type="binding site" evidence="1">
    <location>
        <position position="270"/>
    </location>
    <ligand>
        <name>[4Fe-4S] cluster</name>
        <dbReference type="ChEBI" id="CHEBI:49883"/>
        <label>2</label>
        <note>4Fe-4S-substrate</note>
    </ligand>
</feature>
<sequence length="326" mass="37332">MLDKHERNINYMRISLTDRCNLRCRYCMPETGVDNLTHYSILSLEEMARLVRIASELGIQKIRLTGGEPLVRRNVPQLISYIAQIPRIDDIALTTNGTLFAALAEELKTAGLNRINFSLDSLVPEKFKYITRRGDLSKVKEAIFKALELDMHPVKINMVVIRGFNDDEIIDFVELARKYPLHVRFIEFMPVGDLLFWKKDRMMPAQDIKAYIEESYVLTPQKNILGNGPARYYSLEGGEGSLGFISPMSNHFCGECNRIRLTAEGGLRGCLYDKREVNLKTALKNGSSDEEIKELFIWAIKAKPARHHMNNGWGEENKRKMYQIGG</sequence>
<reference key="1">
    <citation type="journal article" date="2010" name="Environ. Microbiol.">
        <title>The genome of Syntrophomonas wolfei: new insights into syntrophic metabolism and biohydrogen production.</title>
        <authorList>
            <person name="Sieber J.R."/>
            <person name="Sims D.R."/>
            <person name="Han C."/>
            <person name="Kim E."/>
            <person name="Lykidis A."/>
            <person name="Lapidus A.L."/>
            <person name="McDonnald E."/>
            <person name="Rohlin L."/>
            <person name="Culley D.E."/>
            <person name="Gunsalus R."/>
            <person name="McInerney M.J."/>
        </authorList>
    </citation>
    <scope>NUCLEOTIDE SEQUENCE [LARGE SCALE GENOMIC DNA]</scope>
    <source>
        <strain>DSM 2245B / Goettingen</strain>
    </source>
</reference>
<evidence type="ECO:0000255" key="1">
    <source>
        <dbReference type="HAMAP-Rule" id="MF_01225"/>
    </source>
</evidence>
<evidence type="ECO:0000255" key="2">
    <source>
        <dbReference type="PROSITE-ProRule" id="PRU01266"/>
    </source>
</evidence>
<name>MOAA_SYNWW</name>
<dbReference type="EC" id="4.1.99.22" evidence="1"/>
<dbReference type="EMBL" id="CP000448">
    <property type="protein sequence ID" value="ABI69158.1"/>
    <property type="molecule type" value="Genomic_DNA"/>
</dbReference>
<dbReference type="RefSeq" id="WP_011641253.1">
    <property type="nucleotide sequence ID" value="NC_008346.1"/>
</dbReference>
<dbReference type="SMR" id="Q0AVU6"/>
<dbReference type="STRING" id="335541.Swol_1860"/>
<dbReference type="KEGG" id="swo:Swol_1860"/>
<dbReference type="eggNOG" id="COG2896">
    <property type="taxonomic scope" value="Bacteria"/>
</dbReference>
<dbReference type="HOGENOM" id="CLU_009273_0_1_9"/>
<dbReference type="OrthoDB" id="9763993at2"/>
<dbReference type="UniPathway" id="UPA00344"/>
<dbReference type="Proteomes" id="UP000001968">
    <property type="component" value="Chromosome"/>
</dbReference>
<dbReference type="GO" id="GO:0051539">
    <property type="term" value="F:4 iron, 4 sulfur cluster binding"/>
    <property type="evidence" value="ECO:0007669"/>
    <property type="project" value="UniProtKB-UniRule"/>
</dbReference>
<dbReference type="GO" id="GO:0061799">
    <property type="term" value="F:cyclic pyranopterin monophosphate synthase activity"/>
    <property type="evidence" value="ECO:0007669"/>
    <property type="project" value="TreeGrafter"/>
</dbReference>
<dbReference type="GO" id="GO:0061798">
    <property type="term" value="F:GTP 3',8'-cyclase activity"/>
    <property type="evidence" value="ECO:0007669"/>
    <property type="project" value="UniProtKB-UniRule"/>
</dbReference>
<dbReference type="GO" id="GO:0005525">
    <property type="term" value="F:GTP binding"/>
    <property type="evidence" value="ECO:0007669"/>
    <property type="project" value="UniProtKB-UniRule"/>
</dbReference>
<dbReference type="GO" id="GO:0046872">
    <property type="term" value="F:metal ion binding"/>
    <property type="evidence" value="ECO:0007669"/>
    <property type="project" value="UniProtKB-KW"/>
</dbReference>
<dbReference type="GO" id="GO:1904047">
    <property type="term" value="F:S-adenosyl-L-methionine binding"/>
    <property type="evidence" value="ECO:0007669"/>
    <property type="project" value="UniProtKB-UniRule"/>
</dbReference>
<dbReference type="GO" id="GO:0006777">
    <property type="term" value="P:Mo-molybdopterin cofactor biosynthetic process"/>
    <property type="evidence" value="ECO:0007669"/>
    <property type="project" value="UniProtKB-UniRule"/>
</dbReference>
<dbReference type="CDD" id="cd01335">
    <property type="entry name" value="Radical_SAM"/>
    <property type="match status" value="1"/>
</dbReference>
<dbReference type="CDD" id="cd21117">
    <property type="entry name" value="Twitch_MoaA"/>
    <property type="match status" value="1"/>
</dbReference>
<dbReference type="Gene3D" id="3.20.20.70">
    <property type="entry name" value="Aldolase class I"/>
    <property type="match status" value="1"/>
</dbReference>
<dbReference type="HAMAP" id="MF_01225_B">
    <property type="entry name" value="MoaA_B"/>
    <property type="match status" value="1"/>
</dbReference>
<dbReference type="InterPro" id="IPR013785">
    <property type="entry name" value="Aldolase_TIM"/>
</dbReference>
<dbReference type="InterPro" id="IPR006638">
    <property type="entry name" value="Elp3/MiaA/NifB-like_rSAM"/>
</dbReference>
<dbReference type="InterPro" id="IPR013483">
    <property type="entry name" value="MoaA"/>
</dbReference>
<dbReference type="InterPro" id="IPR000385">
    <property type="entry name" value="MoaA_NifB_PqqE_Fe-S-bd_CS"/>
</dbReference>
<dbReference type="InterPro" id="IPR010505">
    <property type="entry name" value="MoaA_twitch"/>
</dbReference>
<dbReference type="InterPro" id="IPR050105">
    <property type="entry name" value="MoCo_biosynth_MoaA/MoaC"/>
</dbReference>
<dbReference type="InterPro" id="IPR007197">
    <property type="entry name" value="rSAM"/>
</dbReference>
<dbReference type="NCBIfam" id="TIGR02666">
    <property type="entry name" value="moaA"/>
    <property type="match status" value="1"/>
</dbReference>
<dbReference type="NCBIfam" id="NF001199">
    <property type="entry name" value="PRK00164.2-1"/>
    <property type="match status" value="1"/>
</dbReference>
<dbReference type="PANTHER" id="PTHR22960:SF0">
    <property type="entry name" value="MOLYBDENUM COFACTOR BIOSYNTHESIS PROTEIN 1"/>
    <property type="match status" value="1"/>
</dbReference>
<dbReference type="PANTHER" id="PTHR22960">
    <property type="entry name" value="MOLYBDOPTERIN COFACTOR SYNTHESIS PROTEIN A"/>
    <property type="match status" value="1"/>
</dbReference>
<dbReference type="Pfam" id="PF13353">
    <property type="entry name" value="Fer4_12"/>
    <property type="match status" value="1"/>
</dbReference>
<dbReference type="Pfam" id="PF06463">
    <property type="entry name" value="Mob_synth_C"/>
    <property type="match status" value="1"/>
</dbReference>
<dbReference type="Pfam" id="PF04055">
    <property type="entry name" value="Radical_SAM"/>
    <property type="match status" value="1"/>
</dbReference>
<dbReference type="SFLD" id="SFLDG01383">
    <property type="entry name" value="cyclic_pyranopterin_phosphate"/>
    <property type="match status" value="1"/>
</dbReference>
<dbReference type="SFLD" id="SFLDG01072">
    <property type="entry name" value="dehydrogenase_like"/>
    <property type="match status" value="1"/>
</dbReference>
<dbReference type="SMART" id="SM00729">
    <property type="entry name" value="Elp3"/>
    <property type="match status" value="1"/>
</dbReference>
<dbReference type="SUPFAM" id="SSF102114">
    <property type="entry name" value="Radical SAM enzymes"/>
    <property type="match status" value="1"/>
</dbReference>
<dbReference type="PROSITE" id="PS01305">
    <property type="entry name" value="MOAA_NIFB_PQQE"/>
    <property type="match status" value="1"/>
</dbReference>
<dbReference type="PROSITE" id="PS51918">
    <property type="entry name" value="RADICAL_SAM"/>
    <property type="match status" value="1"/>
</dbReference>
<proteinExistence type="inferred from homology"/>